<feature type="chain" id="PRO_0000441222" description="bZIP transcription factor RISBZ1">
    <location>
        <begin position="1"/>
        <end position="436"/>
    </location>
</feature>
<feature type="domain" description="bZIP" evidence="1">
    <location>
        <begin position="236"/>
        <end position="299"/>
    </location>
</feature>
<feature type="region of interest" description="Required for transactivation activity" evidence="3">
    <location>
        <begin position="1"/>
        <end position="27"/>
    </location>
</feature>
<feature type="region of interest" description="Disordered" evidence="2">
    <location>
        <begin position="182"/>
        <end position="258"/>
    </location>
</feature>
<feature type="region of interest" description="Basic motif" evidence="1">
    <location>
        <begin position="238"/>
        <end position="257"/>
    </location>
</feature>
<feature type="region of interest" description="Leucine-zipper" evidence="1">
    <location>
        <begin position="264"/>
        <end position="278"/>
    </location>
</feature>
<feature type="compositionally biased region" description="Acidic residues" evidence="2">
    <location>
        <begin position="215"/>
        <end position="225"/>
    </location>
</feature>
<feature type="mutagenesis site" description="Loss of transactivation activity." evidence="3">
    <original>H</original>
    <variation>R</variation>
    <location>
        <position position="3"/>
    </location>
</feature>
<feature type="mutagenesis site" description="Loss of transactivation activity." evidence="3">
    <original>A</original>
    <variation>S</variation>
    <location>
        <position position="6"/>
    </location>
</feature>
<feature type="mutagenesis site" description="Slight decrease of transactivation activity." evidence="3">
    <original>D</original>
    <variation>E</variation>
    <location>
        <position position="8"/>
    </location>
</feature>
<feature type="mutagenesis site" description="Loss of transactivation activity." evidence="3">
    <original>P</original>
    <variation>S</variation>
    <location>
        <position position="11"/>
    </location>
</feature>
<feature type="mutagenesis site" description="Loss of transactivation activity." evidence="3">
    <original>L</original>
    <variation>F</variation>
    <location>
        <position position="14"/>
    </location>
</feature>
<feature type="mutagenesis site" description="Loss of transactivation activity." evidence="3">
    <original>A</original>
    <variation>V</variation>
    <location>
        <position position="16"/>
    </location>
</feature>
<feature type="mutagenesis site" description="Loss of transactivation activity." evidence="3">
    <original>V</original>
    <variation>P</variation>
    <location>
        <position position="21"/>
    </location>
</feature>
<feature type="mutagenesis site" description="Loss of transactivation activity." evidence="3">
    <original>P</original>
    <variation>S</variation>
    <location>
        <position position="23"/>
    </location>
</feature>
<organism>
    <name type="scientific">Oryza sativa subsp. japonica</name>
    <name type="common">Rice</name>
    <dbReference type="NCBI Taxonomy" id="39947"/>
    <lineage>
        <taxon>Eukaryota</taxon>
        <taxon>Viridiplantae</taxon>
        <taxon>Streptophyta</taxon>
        <taxon>Embryophyta</taxon>
        <taxon>Tracheophyta</taxon>
        <taxon>Spermatophyta</taxon>
        <taxon>Magnoliopsida</taxon>
        <taxon>Liliopsida</taxon>
        <taxon>Poales</taxon>
        <taxon>Poaceae</taxon>
        <taxon>BOP clade</taxon>
        <taxon>Oryzoideae</taxon>
        <taxon>Oryzeae</taxon>
        <taxon>Oryzinae</taxon>
        <taxon>Oryza</taxon>
        <taxon>Oryza sativa</taxon>
    </lineage>
</organism>
<name>RSBZ1_ORYSJ</name>
<comment type="function">
    <text evidence="4 5 6 7 8 9">Transcriptional activator that binds to the DNA specific sequence 5'-TGAGTCA-3' found in seed storage protein gene promoters. Involved in the endosperm-specific regulation of storage protein genes (PubMed:15685292). Can activate the expression of genes encoding for the seed storage proteins glutelin, prolamin, globulin and the allergen RAG1. Functions synergistically with DOF3/RPBF to positively regulate quantitatively many seed storage protein genes (PubMed:16798940, PubMed:19473328). Functions synergistically with DOF3/RPBF to positively regulate some metabolic enzymes, such as alanine aminotransferase and pyruvate phosphate dikinase, that are expressed in developing seeds (PubMed:16798940). Functions synergistically with DOF3/RPBF to positively regulate genes that are key players in the development of aleurone layers (PubMed:19473328). Functions synergistically with DOF3/RPBF to positively regulate the glutelin GLUD-1 gene in endosperm of developing seeds (PubMed:18980953). Can activate the expression of the bifunctional lysine-degrading enzyme, lysine ketoglutarate reductase/saccharopine dehydrogenase (LKR/SDH), one of the key regulators determining free lysine content in plants (PubMed:21037241). Functions as a key regulator of starch synthesis in seeds, by direct binding to the promoters of starch-synthesizing genes, such as AGPL3, WAXXY and SBE1 (PubMed:23846875).</text>
</comment>
<comment type="subunit">
    <text evidence="3 7">Homodimer. Forms heterodimers with RISBZ2/BZP33 and RISBZ3/BZP20 (PubMed:11133985). Interacts with DOF3/RPBF (PubMed:19473328).</text>
</comment>
<comment type="subcellular location">
    <subcellularLocation>
        <location evidence="1 7">Nucleus</location>
    </subcellularLocation>
</comment>
<comment type="tissue specificity">
    <text evidence="3">Specifically expressed in seeds. Expressed in aleurone and subaleurone layers of maturing seeds, but not in the embryo tissues.</text>
</comment>
<comment type="developmental stage">
    <text evidence="3">Expressed in developing seeds from 5 to 20 days after flowering (DAF).</text>
</comment>
<evidence type="ECO:0000255" key="1">
    <source>
        <dbReference type="PROSITE-ProRule" id="PRU00978"/>
    </source>
</evidence>
<evidence type="ECO:0000256" key="2">
    <source>
        <dbReference type="SAM" id="MobiDB-lite"/>
    </source>
</evidence>
<evidence type="ECO:0000269" key="3">
    <source>
    </source>
</evidence>
<evidence type="ECO:0000269" key="4">
    <source>
    </source>
</evidence>
<evidence type="ECO:0000269" key="5">
    <source>
    </source>
</evidence>
<evidence type="ECO:0000269" key="6">
    <source>
    </source>
</evidence>
<evidence type="ECO:0000269" key="7">
    <source>
    </source>
</evidence>
<evidence type="ECO:0000269" key="8">
    <source>
    </source>
</evidence>
<evidence type="ECO:0000269" key="9">
    <source>
    </source>
</evidence>
<evidence type="ECO:0000303" key="10">
    <source>
    </source>
</evidence>
<evidence type="ECO:0000303" key="11">
    <source>
    </source>
</evidence>
<evidence type="ECO:0000305" key="12"/>
<evidence type="ECO:0000312" key="13">
    <source>
        <dbReference type="EMBL" id="BAC83055.1"/>
    </source>
</evidence>
<evidence type="ECO:0000312" key="14">
    <source>
        <dbReference type="EMBL" id="BAF20962.1"/>
    </source>
</evidence>
<evidence type="ECO:0000312" key="15">
    <source>
        <dbReference type="EMBL" id="EEE66684.1"/>
    </source>
</evidence>
<dbReference type="EMBL" id="AB053472">
    <property type="protein sequence ID" value="BAB39173.1"/>
    <property type="molecule type" value="mRNA"/>
</dbReference>
<dbReference type="EMBL" id="AB053475">
    <property type="protein sequence ID" value="BAB39176.1"/>
    <property type="molecule type" value="Genomic_DNA"/>
</dbReference>
<dbReference type="EMBL" id="AP003800">
    <property type="protein sequence ID" value="BAC83055.1"/>
    <property type="molecule type" value="Genomic_DNA"/>
</dbReference>
<dbReference type="EMBL" id="AP008213">
    <property type="protein sequence ID" value="BAF20962.1"/>
    <property type="molecule type" value="Genomic_DNA"/>
</dbReference>
<dbReference type="EMBL" id="AP014963">
    <property type="protein sequence ID" value="BAT00329.1"/>
    <property type="molecule type" value="Genomic_DNA"/>
</dbReference>
<dbReference type="EMBL" id="CM000144">
    <property type="protein sequence ID" value="EEE66684.1"/>
    <property type="molecule type" value="Genomic_DNA"/>
</dbReference>
<dbReference type="SMR" id="Q6ZLB0"/>
<dbReference type="FunCoup" id="Q6ZLB0">
    <property type="interactions" value="31"/>
</dbReference>
<dbReference type="STRING" id="39947.Q6ZLB0"/>
<dbReference type="PaxDb" id="39947-Q6ZLB0"/>
<dbReference type="EnsemblPlants" id="Os07t0182000-01">
    <property type="protein sequence ID" value="Os07t0182000-01"/>
    <property type="gene ID" value="Os07g0182000"/>
</dbReference>
<dbReference type="GeneID" id="4342570"/>
<dbReference type="Gramene" id="Os07t0182000-01">
    <property type="protein sequence ID" value="Os07t0182000-01"/>
    <property type="gene ID" value="Os07g0182000"/>
</dbReference>
<dbReference type="KEGG" id="dosa:Os07g0182000"/>
<dbReference type="KEGG" id="osa:4342570"/>
<dbReference type="eggNOG" id="ENOG502QS0A">
    <property type="taxonomic scope" value="Eukaryota"/>
</dbReference>
<dbReference type="HOGENOM" id="CLU_037575_1_1_1"/>
<dbReference type="InParanoid" id="Q6ZLB0"/>
<dbReference type="OMA" id="EAMGNMI"/>
<dbReference type="OrthoDB" id="664875at2759"/>
<dbReference type="Proteomes" id="UP000000763">
    <property type="component" value="Chromosome 7"/>
</dbReference>
<dbReference type="Proteomes" id="UP000007752">
    <property type="component" value="Chromosome 7"/>
</dbReference>
<dbReference type="Proteomes" id="UP000059680">
    <property type="component" value="Chromosome 7"/>
</dbReference>
<dbReference type="GO" id="GO:0005634">
    <property type="term" value="C:nucleus"/>
    <property type="evidence" value="ECO:0000314"/>
    <property type="project" value="UniProtKB"/>
</dbReference>
<dbReference type="GO" id="GO:0003700">
    <property type="term" value="F:DNA-binding transcription factor activity"/>
    <property type="evidence" value="ECO:0007669"/>
    <property type="project" value="InterPro"/>
</dbReference>
<dbReference type="GO" id="GO:0043565">
    <property type="term" value="F:sequence-specific DNA binding"/>
    <property type="evidence" value="ECO:0000314"/>
    <property type="project" value="UniProtKB"/>
</dbReference>
<dbReference type="GO" id="GO:0045893">
    <property type="term" value="P:positive regulation of DNA-templated transcription"/>
    <property type="evidence" value="ECO:0000314"/>
    <property type="project" value="UniProtKB"/>
</dbReference>
<dbReference type="GO" id="GO:0010581">
    <property type="term" value="P:regulation of starch biosynthetic process"/>
    <property type="evidence" value="ECO:0000314"/>
    <property type="project" value="UniProtKB"/>
</dbReference>
<dbReference type="FunFam" id="1.20.5.170:FF:000020">
    <property type="entry name" value="BZIP transcription factor"/>
    <property type="match status" value="1"/>
</dbReference>
<dbReference type="Gene3D" id="1.20.5.170">
    <property type="match status" value="1"/>
</dbReference>
<dbReference type="InterPro" id="IPR020983">
    <property type="entry name" value="Basic_leucine-zipper_C"/>
</dbReference>
<dbReference type="InterPro" id="IPR004827">
    <property type="entry name" value="bZIP"/>
</dbReference>
<dbReference type="InterPro" id="IPR046347">
    <property type="entry name" value="bZIP_sf"/>
</dbReference>
<dbReference type="PANTHER" id="PTHR46408">
    <property type="entry name" value="BASIC LEUCINE ZIPPER 63"/>
    <property type="match status" value="1"/>
</dbReference>
<dbReference type="PANTHER" id="PTHR46408:SF10">
    <property type="entry name" value="BASIC LEUCINE ZIPPER 63"/>
    <property type="match status" value="1"/>
</dbReference>
<dbReference type="Pfam" id="PF00170">
    <property type="entry name" value="bZIP_1"/>
    <property type="match status" value="1"/>
</dbReference>
<dbReference type="Pfam" id="PF12498">
    <property type="entry name" value="bZIP_C"/>
    <property type="match status" value="1"/>
</dbReference>
<dbReference type="SMART" id="SM00338">
    <property type="entry name" value="BRLZ"/>
    <property type="match status" value="1"/>
</dbReference>
<dbReference type="SUPFAM" id="SSF57959">
    <property type="entry name" value="Leucine zipper domain"/>
    <property type="match status" value="1"/>
</dbReference>
<dbReference type="PROSITE" id="PS50217">
    <property type="entry name" value="BZIP"/>
    <property type="match status" value="1"/>
</dbReference>
<reference key="1">
    <citation type="journal article" date="2001" name="J. Biol. Chem.">
        <title>A rice functional transcriptional activator, RISBZ1, responsible for endosperm-specific expression of storage protein genes through GCN4 motif.</title>
        <authorList>
            <person name="Onodera Y."/>
            <person name="Suzuki A."/>
            <person name="Wu C.Y."/>
            <person name="Washida H."/>
            <person name="Takaiwa F."/>
        </authorList>
    </citation>
    <scope>NUCLEOTIDE SEQUENCE [GENOMIC DNA / MRNA]</scope>
    <scope>FUNCTION</scope>
    <scope>HOMODIMERIZATION</scope>
    <scope>TISSUE SPECIFICITY</scope>
    <scope>DEVELOPMENTAL STAGE</scope>
    <scope>MUTAGENESIS OF HIS-3; ALA-6; ASP-8; PRO-11; LEU-14; ALA-16; VAL-21 AND PRO-23</scope>
</reference>
<reference key="2">
    <citation type="journal article" date="2005" name="Nature">
        <title>The map-based sequence of the rice genome.</title>
        <authorList>
            <consortium name="International rice genome sequencing project (IRGSP)"/>
        </authorList>
    </citation>
    <scope>NUCLEOTIDE SEQUENCE [LARGE SCALE GENOMIC DNA]</scope>
    <source>
        <strain>cv. Nipponbare</strain>
    </source>
</reference>
<reference key="3">
    <citation type="journal article" date="2008" name="Nucleic Acids Res.">
        <title>The rice annotation project database (RAP-DB): 2008 update.</title>
        <authorList>
            <consortium name="The rice annotation project (RAP)"/>
        </authorList>
    </citation>
    <scope>GENOME REANNOTATION</scope>
    <source>
        <strain>cv. Nipponbare</strain>
    </source>
</reference>
<reference key="4">
    <citation type="journal article" date="2013" name="Rice">
        <title>Improvement of the Oryza sativa Nipponbare reference genome using next generation sequence and optical map data.</title>
        <authorList>
            <person name="Kawahara Y."/>
            <person name="de la Bastide M."/>
            <person name="Hamilton J.P."/>
            <person name="Kanamori H."/>
            <person name="McCombie W.R."/>
            <person name="Ouyang S."/>
            <person name="Schwartz D.C."/>
            <person name="Tanaka T."/>
            <person name="Wu J."/>
            <person name="Zhou S."/>
            <person name="Childs K.L."/>
            <person name="Davidson R.M."/>
            <person name="Lin H."/>
            <person name="Quesada-Ocampo L."/>
            <person name="Vaillancourt B."/>
            <person name="Sakai H."/>
            <person name="Lee S.S."/>
            <person name="Kim J."/>
            <person name="Numa H."/>
            <person name="Itoh T."/>
            <person name="Buell C.R."/>
            <person name="Matsumoto T."/>
        </authorList>
    </citation>
    <scope>GENOME REANNOTATION</scope>
    <source>
        <strain>cv. Nipponbare</strain>
    </source>
</reference>
<reference key="5">
    <citation type="journal article" date="2005" name="PLoS Biol.">
        <title>The genomes of Oryza sativa: a history of duplications.</title>
        <authorList>
            <person name="Yu J."/>
            <person name="Wang J."/>
            <person name="Lin W."/>
            <person name="Li S."/>
            <person name="Li H."/>
            <person name="Zhou J."/>
            <person name="Ni P."/>
            <person name="Dong W."/>
            <person name="Hu S."/>
            <person name="Zeng C."/>
            <person name="Zhang J."/>
            <person name="Zhang Y."/>
            <person name="Li R."/>
            <person name="Xu Z."/>
            <person name="Li S."/>
            <person name="Li X."/>
            <person name="Zheng H."/>
            <person name="Cong L."/>
            <person name="Lin L."/>
            <person name="Yin J."/>
            <person name="Geng J."/>
            <person name="Li G."/>
            <person name="Shi J."/>
            <person name="Liu J."/>
            <person name="Lv H."/>
            <person name="Li J."/>
            <person name="Wang J."/>
            <person name="Deng Y."/>
            <person name="Ran L."/>
            <person name="Shi X."/>
            <person name="Wang X."/>
            <person name="Wu Q."/>
            <person name="Li C."/>
            <person name="Ren X."/>
            <person name="Wang J."/>
            <person name="Wang X."/>
            <person name="Li D."/>
            <person name="Liu D."/>
            <person name="Zhang X."/>
            <person name="Ji Z."/>
            <person name="Zhao W."/>
            <person name="Sun Y."/>
            <person name="Zhang Z."/>
            <person name="Bao J."/>
            <person name="Han Y."/>
            <person name="Dong L."/>
            <person name="Ji J."/>
            <person name="Chen P."/>
            <person name="Wu S."/>
            <person name="Liu J."/>
            <person name="Xiao Y."/>
            <person name="Bu D."/>
            <person name="Tan J."/>
            <person name="Yang L."/>
            <person name="Ye C."/>
            <person name="Zhang J."/>
            <person name="Xu J."/>
            <person name="Zhou Y."/>
            <person name="Yu Y."/>
            <person name="Zhang B."/>
            <person name="Zhuang S."/>
            <person name="Wei H."/>
            <person name="Liu B."/>
            <person name="Lei M."/>
            <person name="Yu H."/>
            <person name="Li Y."/>
            <person name="Xu H."/>
            <person name="Wei S."/>
            <person name="He X."/>
            <person name="Fang L."/>
            <person name="Zhang Z."/>
            <person name="Zhang Y."/>
            <person name="Huang X."/>
            <person name="Su Z."/>
            <person name="Tong W."/>
            <person name="Li J."/>
            <person name="Tong Z."/>
            <person name="Li S."/>
            <person name="Ye J."/>
            <person name="Wang L."/>
            <person name="Fang L."/>
            <person name="Lei T."/>
            <person name="Chen C.-S."/>
            <person name="Chen H.-C."/>
            <person name="Xu Z."/>
            <person name="Li H."/>
            <person name="Huang H."/>
            <person name="Zhang F."/>
            <person name="Xu H."/>
            <person name="Li N."/>
            <person name="Zhao C."/>
            <person name="Li S."/>
            <person name="Dong L."/>
            <person name="Huang Y."/>
            <person name="Li L."/>
            <person name="Xi Y."/>
            <person name="Qi Q."/>
            <person name="Li W."/>
            <person name="Zhang B."/>
            <person name="Hu W."/>
            <person name="Zhang Y."/>
            <person name="Tian X."/>
            <person name="Jiao Y."/>
            <person name="Liang X."/>
            <person name="Jin J."/>
            <person name="Gao L."/>
            <person name="Zheng W."/>
            <person name="Hao B."/>
            <person name="Liu S.-M."/>
            <person name="Wang W."/>
            <person name="Yuan L."/>
            <person name="Cao M."/>
            <person name="McDermott J."/>
            <person name="Samudrala R."/>
            <person name="Wang J."/>
            <person name="Wong G.K.-S."/>
            <person name="Yang H."/>
        </authorList>
    </citation>
    <scope>NUCLEOTIDE SEQUENCE [LARGE SCALE GENOMIC DNA]</scope>
    <source>
        <strain>cv. Nipponbare</strain>
    </source>
</reference>
<reference key="6">
    <citation type="journal article" date="2006" name="Plant Physiol.">
        <title>Synergism between RPBF Dof and RISBZ1 bZIP activators in the regulation of rice seed expression genes.</title>
        <authorList>
            <person name="Yamamoto M.P."/>
            <person name="Onodera Y."/>
            <person name="Touno S.M."/>
            <person name="Takaiwa F."/>
        </authorList>
    </citation>
    <scope>FUNCTION</scope>
</reference>
<reference key="7">
    <citation type="journal article" date="2008" name="J. Exp. Bot.">
        <title>Characterization of a new rice glutelin gene GluD-1 expressed in the starchy endosperm.</title>
        <authorList>
            <person name="Kawakatsu T."/>
            <person name="Yamamoto M.P."/>
            <person name="Hirose S."/>
            <person name="Yano M."/>
            <person name="Takaiwa F."/>
        </authorList>
    </citation>
    <scope>FUNCTION</scope>
</reference>
<reference key="8">
    <citation type="journal article" date="2008" name="Plant Physiol.">
        <title>Genomic survey and gene expression analysis of the basic leucine zipper transcription factor family in rice.</title>
        <authorList>
            <person name="Nijhawan A."/>
            <person name="Jain M."/>
            <person name="Tyagi A.K."/>
            <person name="Khurana J.P."/>
        </authorList>
    </citation>
    <scope>GENE FAMILY</scope>
    <scope>NOMENCLATURE</scope>
</reference>
<reference key="9">
    <citation type="journal article" date="2009" name="Plant J.">
        <title>Compensation and interaction between RISBZ1 and RPBF during grain filling in rice.</title>
        <authorList>
            <person name="Kawakatsu T."/>
            <person name="Yamamoto M.P."/>
            <person name="Touno S.M."/>
            <person name="Yasuda H."/>
            <person name="Takaiwa F."/>
        </authorList>
    </citation>
    <scope>FUNCTION</scope>
    <scope>INTERACTION WITH DOF3/RPBF</scope>
    <scope>SUBCELLULAR LOCATION</scope>
</reference>
<reference key="10">
    <citation type="journal article" date="2010" name="Plant Cell Physiol.">
        <title>Differences in transcriptional regulatory mechanisms functioning for free lysine content and seed storage protein accumulation in rice grain.</title>
        <authorList>
            <person name="Kawakatsu T."/>
            <person name="Takaiwa F."/>
        </authorList>
    </citation>
    <scope>FUNCTION</scope>
</reference>
<reference key="11">
    <citation type="journal article" date="2013" name="J. Exp. Bot.">
        <title>OsbZIP58, a basic leucine zipper transcription factor, regulates starch biosynthesis in rice endosperm.</title>
        <authorList>
            <person name="Wang J.C."/>
            <person name="Xu H."/>
            <person name="Zhu Y."/>
            <person name="Liu Q.Q."/>
            <person name="Cai X.L."/>
        </authorList>
    </citation>
    <scope>FUNCTION</scope>
</reference>
<sequence>MEHVFAVDEIPDPLWAPPPPVQPAAAAGVDDVGAVSGGGLLERCPSGWNLERFLEELDGVPAPAASPDGAAIYPSPMPAAAAEAAARWSRGYGDREAVGVMPMPAAALPAAPASAAMDPVEYNAMLKRKLDEDLATVAMWRASGAIHSESPLGNKTSLSIVGSILSSQKCIEGNGILVQTKLSPGPNGGSGPYVNQNTDAHAKQATSGSSREPSPSEDDDMEGDAEAMGNMILDEEDKVKKRKESNRESARRSRSRKAARLKDLEEQVSLLRVENSSLLRRLADANQKYSAAAIDNRVLMADIEALRAKVRMAEESVKMVTGARQLHQAIPDMQSPLNVNSDASVPIQNNNPMNYFSNANNAGVNSFMHQVSPAFQIVDSVEKIDPTDPVQLQQQQMASLQHLQNRACGGGASSNEYTAWGSSLMDANELVNMELQ</sequence>
<gene>
    <name evidence="10" type="primary">RISBZ1</name>
    <name evidence="11" type="synonym">BZIP58</name>
    <name evidence="14" type="ordered locus">Os07g0182000</name>
    <name evidence="12" type="ordered locus">LOC_Os07g08420</name>
    <name evidence="13" type="ORF">OJ1014_E09.42</name>
    <name evidence="15" type="ORF">OsJ_23334</name>
</gene>
<protein>
    <recommendedName>
        <fullName evidence="12">bZIP transcription factor RISBZ1</fullName>
    </recommendedName>
    <alternativeName>
        <fullName evidence="12">Rice seed bZIP1</fullName>
    </alternativeName>
    <alternativeName>
        <fullName evidence="11">bZIP transcription factor 58</fullName>
        <shortName evidence="11">OsbZIP58</shortName>
    </alternativeName>
</protein>
<proteinExistence type="evidence at protein level"/>
<accession>Q6ZLB0</accession>
<accession>Q9AR01</accession>
<keyword id="KW-0010">Activator</keyword>
<keyword id="KW-0238">DNA-binding</keyword>
<keyword id="KW-0539">Nucleus</keyword>
<keyword id="KW-1185">Reference proteome</keyword>
<keyword id="KW-0804">Transcription</keyword>
<keyword id="KW-0805">Transcription regulation</keyword>